<evidence type="ECO:0000250" key="1">
    <source>
        <dbReference type="UniProtKB" id="Q8N0Z6"/>
    </source>
</evidence>
<evidence type="ECO:0000269" key="2">
    <source>
    </source>
</evidence>
<evidence type="ECO:0000269" key="3">
    <source>
    </source>
</evidence>
<evidence type="ECO:0000269" key="4">
    <source>
    </source>
</evidence>
<evidence type="ECO:0000269" key="5">
    <source>
    </source>
</evidence>
<evidence type="ECO:0000269" key="6">
    <source>
    </source>
</evidence>
<evidence type="ECO:0000269" key="7">
    <source>
    </source>
</evidence>
<evidence type="ECO:0000269" key="8">
    <source>
    </source>
</evidence>
<evidence type="ECO:0000269" key="9">
    <source>
    </source>
</evidence>
<evidence type="ECO:0000303" key="10">
    <source>
    </source>
</evidence>
<evidence type="ECO:0000303" key="11">
    <source>
    </source>
</evidence>
<evidence type="ECO:0000305" key="12"/>
<evidence type="ECO:0000305" key="13">
    <source>
    </source>
</evidence>
<evidence type="ECO:0000312" key="14">
    <source>
        <dbReference type="MGI" id="MGI:2683584"/>
    </source>
</evidence>
<evidence type="ECO:0007829" key="15">
    <source>
        <dbReference type="PDB" id="4ABN"/>
    </source>
</evidence>
<name>TTC5_MOUSE</name>
<feature type="chain" id="PRO_0000106382" description="Tetratricopeptide repeat protein 5">
    <location>
        <begin position="1"/>
        <end position="440"/>
    </location>
</feature>
<feature type="repeat" description="TPR 1" evidence="7">
    <location>
        <begin position="7"/>
        <end position="61"/>
    </location>
</feature>
<feature type="repeat" description="TPR 2" evidence="7">
    <location>
        <begin position="68"/>
        <end position="98"/>
    </location>
</feature>
<feature type="repeat" description="TPR 3" evidence="7">
    <location>
        <begin position="103"/>
        <end position="130"/>
    </location>
</feature>
<feature type="repeat" description="TPR 4" evidence="7">
    <location>
        <begin position="136"/>
        <end position="174"/>
    </location>
</feature>
<feature type="repeat" description="TPR 5" evidence="7">
    <location>
        <begin position="179"/>
        <end position="216"/>
    </location>
</feature>
<feature type="repeat" description="TPR 6" evidence="7">
    <location>
        <begin position="224"/>
        <end position="253"/>
    </location>
</feature>
<feature type="region of interest" description="Mediates interaction with 28S rRNA of ribosome-coding tubulin" evidence="1">
    <location>
        <begin position="285"/>
        <end position="287"/>
    </location>
</feature>
<feature type="short sequence motif" description="Nuclear export signal" evidence="5">
    <location>
        <begin position="13"/>
        <end position="24"/>
    </location>
</feature>
<feature type="site" description="Mediates interaction with N-terminal MREI motif of beta-tubulin nascent chain" evidence="1">
    <location>
        <position position="147"/>
    </location>
</feature>
<feature type="site" description="Mediates interaction with N-terminal MREI motif of beta-tubulin nascent chain" evidence="1">
    <location>
        <position position="225"/>
    </location>
</feature>
<feature type="site" description="Mediates interaction with N-terminal MREI motif of beta-tubulin nascent chain" evidence="1">
    <location>
        <position position="259"/>
    </location>
</feature>
<feature type="modified residue" description="Phosphoserine; by ATM" evidence="3 7">
    <location>
        <position position="203"/>
    </location>
</feature>
<feature type="modified residue" description="Phosphoserine; by CHEK2" evidence="5 7">
    <location>
        <position position="221"/>
    </location>
</feature>
<feature type="mutagenesis site" description="Increased nuclear localization in non-stress conditions. No change in protein accumulation and stability in response to DNA damage. No change in subcellular localization in non-stress conditions; when associated with 13-L--Y-24. No change in protein accumulation and stability in response to DNA damage; when associated with 13-L--Y-24." evidence="5">
    <location>
        <begin position="13"/>
        <end position="24"/>
    </location>
</feature>
<feature type="mutagenesis site" description="Loss of phosphorylation at S-203; decreased nuclear localization in non-stress conditions; loss of nuclear accumulation and stability in response to DNA damage. No change in subcellular localization in non-stress conditions; when associated with 13-L--Y-24. No change in protein accumulation and stability in response to DNA damage; when associated with 13-L--Y-24." evidence="3 5">
    <original>S</original>
    <variation>A</variation>
    <location>
        <position position="203"/>
    </location>
</feature>
<feature type="mutagenesis site" description="No change in subcellular localization in non-stress conditions. No change in protein accumulation and stability in response to DNA damage." evidence="5">
    <original>S</original>
    <variation>D</variation>
    <location>
        <position position="203"/>
    </location>
</feature>
<feature type="mutagenesis site" description="Decreased phosphorylation. No change in subcellular localization in non-stress conditions. No change in nuclear accumulation in response to DNA damage. Impaired stability in response to DNA damage." evidence="5">
    <original>S</original>
    <variation>A</variation>
    <location>
        <position position="221"/>
    </location>
</feature>
<feature type="sequence conflict" description="In Ref. 2; AAH03272/AAH25610/AAH92074." evidence="12" ref="2">
    <original>A</original>
    <variation>T</variation>
    <location>
        <position position="120"/>
    </location>
</feature>
<feature type="sequence conflict" description="In Ref. 2; AAH03272/AAH25610/AAH92074." evidence="12" ref="2">
    <original>V</original>
    <variation>A</variation>
    <location>
        <position position="256"/>
    </location>
</feature>
<feature type="sequence conflict" description="In Ref. 1; BAE34192." evidence="12" ref="1">
    <original>S</original>
    <variation>Y</variation>
    <location>
        <position position="430"/>
    </location>
</feature>
<feature type="helix" evidence="15">
    <location>
        <begin position="5"/>
        <end position="28"/>
    </location>
</feature>
<feature type="helix" evidence="15">
    <location>
        <begin position="30"/>
        <end position="33"/>
    </location>
</feature>
<feature type="helix" evidence="15">
    <location>
        <begin position="36"/>
        <end position="41"/>
    </location>
</feature>
<feature type="helix" evidence="15">
    <location>
        <begin position="42"/>
        <end position="61"/>
    </location>
</feature>
<feature type="helix" evidence="15">
    <location>
        <begin position="68"/>
        <end position="78"/>
    </location>
</feature>
<feature type="strand" evidence="15">
    <location>
        <begin position="80"/>
        <end position="83"/>
    </location>
</feature>
<feature type="helix" evidence="15">
    <location>
        <begin position="86"/>
        <end position="98"/>
    </location>
</feature>
<feature type="helix" evidence="15">
    <location>
        <begin position="103"/>
        <end position="116"/>
    </location>
</feature>
<feature type="helix" evidence="15">
    <location>
        <begin position="119"/>
        <end position="130"/>
    </location>
</feature>
<feature type="helix" evidence="15">
    <location>
        <begin position="136"/>
        <end position="146"/>
    </location>
</feature>
<feature type="helix" evidence="15">
    <location>
        <begin position="154"/>
        <end position="174"/>
    </location>
</feature>
<feature type="helix" evidence="15">
    <location>
        <begin position="179"/>
        <end position="195"/>
    </location>
</feature>
<feature type="helix" evidence="15">
    <location>
        <begin position="200"/>
        <end position="216"/>
    </location>
</feature>
<feature type="helix" evidence="15">
    <location>
        <begin position="218"/>
        <end position="222"/>
    </location>
</feature>
<feature type="helix" evidence="15">
    <location>
        <begin position="224"/>
        <end position="236"/>
    </location>
</feature>
<feature type="helix" evidence="15">
    <location>
        <begin position="240"/>
        <end position="253"/>
    </location>
</feature>
<feature type="helix" evidence="15">
    <location>
        <begin position="258"/>
        <end position="280"/>
    </location>
</feature>
<feature type="turn" evidence="15">
    <location>
        <begin position="281"/>
        <end position="283"/>
    </location>
</feature>
<feature type="helix" evidence="15">
    <location>
        <begin position="286"/>
        <end position="294"/>
    </location>
</feature>
<feature type="helix" evidence="15">
    <location>
        <begin position="299"/>
        <end position="301"/>
    </location>
</feature>
<feature type="turn" evidence="15">
    <location>
        <begin position="304"/>
        <end position="307"/>
    </location>
</feature>
<feature type="helix" evidence="15">
    <location>
        <begin position="324"/>
        <end position="326"/>
    </location>
</feature>
<feature type="strand" evidence="15">
    <location>
        <begin position="329"/>
        <end position="331"/>
    </location>
</feature>
<feature type="strand" evidence="15">
    <location>
        <begin position="335"/>
        <end position="345"/>
    </location>
</feature>
<feature type="strand" evidence="15">
    <location>
        <begin position="352"/>
        <end position="362"/>
    </location>
</feature>
<feature type="strand" evidence="15">
    <location>
        <begin position="365"/>
        <end position="369"/>
    </location>
</feature>
<feature type="strand" evidence="15">
    <location>
        <begin position="383"/>
        <end position="388"/>
    </location>
</feature>
<feature type="strand" evidence="15">
    <location>
        <begin position="390"/>
        <end position="398"/>
    </location>
</feature>
<feature type="strand" evidence="15">
    <location>
        <begin position="401"/>
        <end position="411"/>
    </location>
</feature>
<feature type="helix" evidence="15">
    <location>
        <begin position="413"/>
        <end position="415"/>
    </location>
</feature>
<feature type="helix" evidence="15">
    <location>
        <begin position="425"/>
        <end position="427"/>
    </location>
</feature>
<feature type="strand" evidence="15">
    <location>
        <begin position="428"/>
        <end position="430"/>
    </location>
</feature>
<keyword id="KW-0002">3D-structure</keyword>
<keyword id="KW-0963">Cytoplasm</keyword>
<keyword id="KW-0968">Cytoplasmic vesicle</keyword>
<keyword id="KW-0227">DNA damage</keyword>
<keyword id="KW-0234">DNA repair</keyword>
<keyword id="KW-0496">Mitochondrion</keyword>
<keyword id="KW-0539">Nucleus</keyword>
<keyword id="KW-0597">Phosphoprotein</keyword>
<keyword id="KW-1185">Reference proteome</keyword>
<keyword id="KW-0677">Repeat</keyword>
<keyword id="KW-0802">TPR repeat</keyword>
<gene>
    <name evidence="14" type="primary">Ttc5</name>
    <name evidence="10" type="synonym">Strap</name>
</gene>
<sequence>MMADEEEEAKHVLQKLQGLVDRLYCFRDSYFETHSVEDAGRKQQDVQEEMEKTLQQMEEVLGSAQVEAQALMLKGKALNVTPDYSPEAEVLLSKAVKLEPELVEAWNQLGEVYWKKGDVASAHTCFSGALTHCKNKVSLQNLSMVLRQLQTDSGDEHSRHVMDSVRQAKLAVQMDVLDGRSWYILGNAYLSLYFNTGQNPKISQQALSAYAQAEKVDRKASSNPDLHLNRATLHKYEESYGEALEGFSQAAALDPVWPEPQQREQQLLEFLSRLTSLLESKGKTKPKKLQSMLGSLRPAHLGPCGDGRYQSASGQKMTLELKPLSTLQPGVNSGTVVLGKVVFSLTTEEKVPFTFGLVDSDGPCYAVMVYNVVQSWGVLIGDSVAIPEPNLRHHQIRHKGKDYSFSSVRVETPLLLVVNGKPQNSSSQASATVASRPQCE</sequence>
<proteinExistence type="evidence at protein level"/>
<comment type="function">
    <text evidence="1 2 3 4 5 6 8 9">Cofactor involved in the regulation of various cellular mechanisms such as actin regulation, autophagy, chromatin regulation and DNA repair (PubMed:11511361, PubMed:15448695, PubMed:18451878, PubMed:30420355). In physiological conditions, interacts with cofactor JMY in the cytoplasm which prevents JMY's actin nucleation activity and ability to activate the Arp2/3 complex (PubMed:30420355). Acts as a negative regulator of nutrient stress-induced autophagy by inhibiting JMY's interaction with MAP1LC3B, thereby preventing autophagosome formation (PubMed:30420355). Involves in tubulin autoregulation by promoting its degradation in response to excess soluble tubulin (By similarity). To do so, associates with the active ribosome near the ribosome exit tunnel and with nascent tubulin polypeptides early during their translation, triggering tubulin mRNA-targeted degradation (By similarity). Following DNA damage, phosphorylated by DNA damage responsive protein kinases ATM and CHEK2, leading to its nuclear accumulation and stability (PubMed:15448695, PubMed:18833288). Nuclear TTC5/STRAP promotes the assembly of a stress-responsive p53/TP53 coactivator complex, which includes the coactivators JMY and p300, thereby increasing p53/TP53-dependent transcription and apoptosis (PubMed:11511361). Also recruits arginine methyltransferase PRMT5 to p53/TP53 when DNA is damaged, allowing PRMT5 to methylate p53/TP53 (PubMed:19011621). In DNA stress conditions, also prevents p53/TP53 degradation by E3 ubiquitin ligase MDM2 (PubMed:11511361). Upon heat-shock stress, forms a chromatin-associated complex with heat-shock factor 1 HSF1 and p300/EP300 to stimulate heat-shock-responsive transcription, thereby increasing cell survival (PubMed:18451878). Mitochondrial TTC5/STRAP interacts with ATP synthase subunit beta ATP5F1B which decreased ATP synthase activity and lowers mitochondrial ATP production, thereby regulating cellular respiration and mitochondrial-dependent apoptosis (PubMed:25168243). Mitochondrial TTC5/STRAP also regulates p53/TP53-mediated apoptosis (PubMed:25168243).</text>
</comment>
<comment type="subunit">
    <text evidence="1 2 3 4 6 8 9">Interacts with JMY and p300/EP300; the interaction occurs in the nucleus and augments the association between JMY and p300/EP300 in response to DNA damage (PubMed:11511361, PubMed:15448695). Interacts with PRMT5; the interaction is DNA damage-dependent and promotes PRMT5 interaction with p53/TP53 and subsequent methylation (PubMed:19011621). Forms a complex with HSF1 and p300/EP300; these interactions augment chromatin-bound HSF1 and p300/EP300 histone acetyltransferase activity, resulting in enhanced heat-shock-responsive transcription (PubMed:18451878). Interacts with JMY; the interaction occurs in the cytoplasm and results in the inhibition of JYM's nucleation activity (PubMed:30420355). Interacts with ribosome-coding tubulin (via 60S subunit 28S rRNA and protein uL24/RPL26) and the N-terminal of nascent tubulin polypeptide (via alpha-tubulin MREC motif and beta-tubulin MREI motif); these interactions result in tubulin mRNA-targeted degradation (By similarity). Interacts with ATP5F1B; the interaction occurs in the mitochondria and results in ATP production decrease (PubMed:25168243). Interacts with p53/TP53; the interaction occurs in the mitochondria and results in increased apoptosis (PubMed:25168243).</text>
</comment>
<comment type="interaction">
    <interactant intactId="EBI-21183045">
        <id>Q99LG4</id>
    </interactant>
    <interactant intactId="EBI-308990">
        <id>Q3UA06</id>
        <label>Trip13</label>
    </interactant>
    <organismsDiffer>false</organismsDiffer>
    <experiments>2</experiments>
</comment>
<comment type="subcellular location">
    <subcellularLocation>
        <location evidence="3 5">Nucleus</location>
    </subcellularLocation>
    <subcellularLocation>
        <location evidence="3 5 8 9">Cytoplasm</location>
    </subcellularLocation>
    <subcellularLocation>
        <location evidence="9">Cytoplasmic vesicle</location>
    </subcellularLocation>
    <subcellularLocation>
        <location evidence="8">Mitochondrion matrix</location>
    </subcellularLocation>
    <text evidence="3 5">Phosphorylation at Ser-203 results in nuclear localization, while unphosphorylated protein localizes to the cytoplasm (PubMed:15448695). Nuclear localization may be necessary for DNA damage-dependent stabilization of the protein (PubMed:15448695, PubMed:18833288).</text>
</comment>
<comment type="tissue specificity">
    <text evidence="2">Expressed in heart, brain, spleen, lung, liver, skeletal muscle, kidney and testis.</text>
</comment>
<comment type="induction">
    <text evidence="2 4 5">Stress-responsive protein (PubMed:11511361, PubMed:18833288). Induced upon UV or ionizing irradiation (at protein level) (PubMed:11511361). Induced upon heat-shock stress (at protein level) (PubMed:18451878).</text>
</comment>
<comment type="domain">
    <text evidence="13">The tetratricopep-repeat (TPR) motifs may function as protein interaction domains.</text>
</comment>
<comment type="PTM">
    <text evidence="3 5">Phosphorylation by ATM kinase induces nuclear accumulation while interfering with nuclear export, and phosphorylation by CHEK2 kinase enhances nuclear stability.</text>
</comment>
<accession>Q99LG4</accession>
<accession>Q3TTN5</accession>
<accession>Q3TZL6</accession>
<dbReference type="EMBL" id="AK157777">
    <property type="protein sequence ID" value="BAE34192.1"/>
    <property type="molecule type" value="mRNA"/>
</dbReference>
<dbReference type="EMBL" id="AK161279">
    <property type="protein sequence ID" value="BAE36290.1"/>
    <property type="molecule type" value="mRNA"/>
</dbReference>
<dbReference type="EMBL" id="BC003272">
    <property type="protein sequence ID" value="AAH03272.1"/>
    <property type="molecule type" value="mRNA"/>
</dbReference>
<dbReference type="EMBL" id="BC025610">
    <property type="protein sequence ID" value="AAH25610.1"/>
    <property type="molecule type" value="mRNA"/>
</dbReference>
<dbReference type="EMBL" id="BC092074">
    <property type="protein sequence ID" value="AAH92074.1"/>
    <property type="molecule type" value="mRNA"/>
</dbReference>
<dbReference type="CCDS" id="CCDS36905.1"/>
<dbReference type="RefSeq" id="NP_001074418.1">
    <property type="nucleotide sequence ID" value="NM_001080949.2"/>
</dbReference>
<dbReference type="PDB" id="4ABN">
    <property type="method" value="X-ray"/>
    <property type="resolution" value="2.05 A"/>
    <property type="chains" value="A/B=1-440"/>
</dbReference>
<dbReference type="PDBsum" id="4ABN"/>
<dbReference type="SMR" id="Q99LG4"/>
<dbReference type="BioGRID" id="230097">
    <property type="interactions" value="6"/>
</dbReference>
<dbReference type="FunCoup" id="Q99LG4">
    <property type="interactions" value="5140"/>
</dbReference>
<dbReference type="IntAct" id="Q99LG4">
    <property type="interactions" value="1"/>
</dbReference>
<dbReference type="STRING" id="10090.ENSMUSP00000006451"/>
<dbReference type="GlyGen" id="Q99LG4">
    <property type="glycosylation" value="1 site, 1 N-linked glycan (1 site)"/>
</dbReference>
<dbReference type="iPTMnet" id="Q99LG4"/>
<dbReference type="PhosphoSitePlus" id="Q99LG4"/>
<dbReference type="SwissPalm" id="Q99LG4"/>
<dbReference type="PaxDb" id="10090-ENSMUSP00000006451"/>
<dbReference type="ProteomicsDB" id="298155"/>
<dbReference type="Pumba" id="Q99LG4"/>
<dbReference type="Antibodypedia" id="6802">
    <property type="antibodies" value="136 antibodies from 27 providers"/>
</dbReference>
<dbReference type="DNASU" id="219022"/>
<dbReference type="Ensembl" id="ENSMUST00000006451.8">
    <property type="protein sequence ID" value="ENSMUSP00000006451.7"/>
    <property type="gene ID" value="ENSMUSG00000006288.9"/>
</dbReference>
<dbReference type="GeneID" id="219022"/>
<dbReference type="KEGG" id="mmu:219022"/>
<dbReference type="UCSC" id="uc007tlm.2">
    <property type="organism name" value="mouse"/>
</dbReference>
<dbReference type="AGR" id="MGI:2683584"/>
<dbReference type="CTD" id="91875"/>
<dbReference type="MGI" id="MGI:2683584">
    <property type="gene designation" value="Ttc5"/>
</dbReference>
<dbReference type="VEuPathDB" id="HostDB:ENSMUSG00000006288"/>
<dbReference type="eggNOG" id="ENOG502QQ6C">
    <property type="taxonomic scope" value="Eukaryota"/>
</dbReference>
<dbReference type="GeneTree" id="ENSGT00390000006227"/>
<dbReference type="HOGENOM" id="CLU_026886_2_1_1"/>
<dbReference type="InParanoid" id="Q99LG4"/>
<dbReference type="OMA" id="DECKGYE"/>
<dbReference type="OrthoDB" id="423589at2759"/>
<dbReference type="PhylomeDB" id="Q99LG4"/>
<dbReference type="TreeFam" id="TF316804"/>
<dbReference type="Reactome" id="R-MMU-6804760">
    <property type="pathway name" value="Regulation of TP53 Activity through Methylation"/>
</dbReference>
<dbReference type="BioGRID-ORCS" id="219022">
    <property type="hits" value="2 hits in 112 CRISPR screens"/>
</dbReference>
<dbReference type="ChiTaRS" id="Ttc5">
    <property type="organism name" value="mouse"/>
</dbReference>
<dbReference type="EvolutionaryTrace" id="Q99LG4"/>
<dbReference type="PRO" id="PR:Q99LG4"/>
<dbReference type="Proteomes" id="UP000000589">
    <property type="component" value="Chromosome 14"/>
</dbReference>
<dbReference type="RNAct" id="Q99LG4">
    <property type="molecule type" value="protein"/>
</dbReference>
<dbReference type="Bgee" id="ENSMUSG00000006288">
    <property type="expression patterns" value="Expressed in embryonic brain and 233 other cell types or tissues"/>
</dbReference>
<dbReference type="ExpressionAtlas" id="Q99LG4">
    <property type="expression patterns" value="baseline and differential"/>
</dbReference>
<dbReference type="GO" id="GO:0005737">
    <property type="term" value="C:cytoplasm"/>
    <property type="evidence" value="ECO:0000314"/>
    <property type="project" value="MGI"/>
</dbReference>
<dbReference type="GO" id="GO:0031410">
    <property type="term" value="C:cytoplasmic vesicle"/>
    <property type="evidence" value="ECO:0000314"/>
    <property type="project" value="UniProtKB"/>
</dbReference>
<dbReference type="GO" id="GO:0005829">
    <property type="term" value="C:cytosol"/>
    <property type="evidence" value="ECO:0000314"/>
    <property type="project" value="UniProtKB"/>
</dbReference>
<dbReference type="GO" id="GO:0005759">
    <property type="term" value="C:mitochondrial matrix"/>
    <property type="evidence" value="ECO:0007669"/>
    <property type="project" value="UniProtKB-SubCell"/>
</dbReference>
<dbReference type="GO" id="GO:0005739">
    <property type="term" value="C:mitochondrion"/>
    <property type="evidence" value="ECO:0000314"/>
    <property type="project" value="UniProtKB"/>
</dbReference>
<dbReference type="GO" id="GO:0005654">
    <property type="term" value="C:nucleoplasm"/>
    <property type="evidence" value="ECO:0007669"/>
    <property type="project" value="Ensembl"/>
</dbReference>
<dbReference type="GO" id="GO:0005634">
    <property type="term" value="C:nucleus"/>
    <property type="evidence" value="ECO:0000314"/>
    <property type="project" value="UniProtKB"/>
</dbReference>
<dbReference type="GO" id="GO:0003682">
    <property type="term" value="F:chromatin binding"/>
    <property type="evidence" value="ECO:0000314"/>
    <property type="project" value="MGI"/>
</dbReference>
<dbReference type="GO" id="GO:0003677">
    <property type="term" value="F:DNA binding"/>
    <property type="evidence" value="ECO:0000314"/>
    <property type="project" value="MGI"/>
</dbReference>
<dbReference type="GO" id="GO:0043022">
    <property type="term" value="F:ribosome binding"/>
    <property type="evidence" value="ECO:0007669"/>
    <property type="project" value="Ensembl"/>
</dbReference>
<dbReference type="GO" id="GO:0009267">
    <property type="term" value="P:cellular response to starvation"/>
    <property type="evidence" value="ECO:0000315"/>
    <property type="project" value="UniProtKB"/>
</dbReference>
<dbReference type="GO" id="GO:0006974">
    <property type="term" value="P:DNA damage response"/>
    <property type="evidence" value="ECO:0000314"/>
    <property type="project" value="UniProtKB"/>
</dbReference>
<dbReference type="GO" id="GO:0006281">
    <property type="term" value="P:DNA repair"/>
    <property type="evidence" value="ECO:0007669"/>
    <property type="project" value="UniProtKB-KW"/>
</dbReference>
<dbReference type="GO" id="GO:0061014">
    <property type="term" value="P:positive regulation of mRNA catabolic process"/>
    <property type="evidence" value="ECO:0007669"/>
    <property type="project" value="Ensembl"/>
</dbReference>
<dbReference type="GO" id="GO:0045944">
    <property type="term" value="P:positive regulation of transcription by RNA polymerase II"/>
    <property type="evidence" value="ECO:0000316"/>
    <property type="project" value="MGI"/>
</dbReference>
<dbReference type="FunFam" id="1.25.40.10:FF:000194">
    <property type="entry name" value="Tetratricopeptide repeat domain 5"/>
    <property type="match status" value="1"/>
</dbReference>
<dbReference type="FunFam" id="2.40.50.550:FF:000001">
    <property type="entry name" value="Tetratricopeptide repeat domain 5"/>
    <property type="match status" value="1"/>
</dbReference>
<dbReference type="Gene3D" id="2.40.50.550">
    <property type="match status" value="1"/>
</dbReference>
<dbReference type="Gene3D" id="1.25.40.10">
    <property type="entry name" value="Tetratricopeptide repeat domain"/>
    <property type="match status" value="1"/>
</dbReference>
<dbReference type="InterPro" id="IPR011990">
    <property type="entry name" value="TPR-like_helical_dom_sf"/>
</dbReference>
<dbReference type="InterPro" id="IPR019734">
    <property type="entry name" value="TPR_rpt"/>
</dbReference>
<dbReference type="InterPro" id="IPR032076">
    <property type="entry name" value="TTC5_OB"/>
</dbReference>
<dbReference type="InterPro" id="IPR038645">
    <property type="entry name" value="TTC5_OB_sf"/>
</dbReference>
<dbReference type="InterPro" id="IPR051685">
    <property type="entry name" value="Ycf3/AcsC/BcsC/TPR_MFPF"/>
</dbReference>
<dbReference type="PANTHER" id="PTHR44943">
    <property type="entry name" value="CELLULOSE SYNTHASE OPERON PROTEIN C"/>
    <property type="match status" value="1"/>
</dbReference>
<dbReference type="PANTHER" id="PTHR44943:SF4">
    <property type="entry name" value="TPR REPEAT-CONTAINING PROTEIN MJ0798"/>
    <property type="match status" value="1"/>
</dbReference>
<dbReference type="Pfam" id="PF16669">
    <property type="entry name" value="TTC5_OB"/>
    <property type="match status" value="1"/>
</dbReference>
<dbReference type="SMART" id="SM00028">
    <property type="entry name" value="TPR"/>
    <property type="match status" value="3"/>
</dbReference>
<dbReference type="SUPFAM" id="SSF48452">
    <property type="entry name" value="TPR-like"/>
    <property type="match status" value="1"/>
</dbReference>
<dbReference type="PROSITE" id="PS50293">
    <property type="entry name" value="TPR_REGION"/>
    <property type="match status" value="2"/>
</dbReference>
<reference key="1">
    <citation type="journal article" date="2005" name="Science">
        <title>The transcriptional landscape of the mammalian genome.</title>
        <authorList>
            <person name="Carninci P."/>
            <person name="Kasukawa T."/>
            <person name="Katayama S."/>
            <person name="Gough J."/>
            <person name="Frith M.C."/>
            <person name="Maeda N."/>
            <person name="Oyama R."/>
            <person name="Ravasi T."/>
            <person name="Lenhard B."/>
            <person name="Wells C."/>
            <person name="Kodzius R."/>
            <person name="Shimokawa K."/>
            <person name="Bajic V.B."/>
            <person name="Brenner S.E."/>
            <person name="Batalov S."/>
            <person name="Forrest A.R."/>
            <person name="Zavolan M."/>
            <person name="Davis M.J."/>
            <person name="Wilming L.G."/>
            <person name="Aidinis V."/>
            <person name="Allen J.E."/>
            <person name="Ambesi-Impiombato A."/>
            <person name="Apweiler R."/>
            <person name="Aturaliya R.N."/>
            <person name="Bailey T.L."/>
            <person name="Bansal M."/>
            <person name="Baxter L."/>
            <person name="Beisel K.W."/>
            <person name="Bersano T."/>
            <person name="Bono H."/>
            <person name="Chalk A.M."/>
            <person name="Chiu K.P."/>
            <person name="Choudhary V."/>
            <person name="Christoffels A."/>
            <person name="Clutterbuck D.R."/>
            <person name="Crowe M.L."/>
            <person name="Dalla E."/>
            <person name="Dalrymple B.P."/>
            <person name="de Bono B."/>
            <person name="Della Gatta G."/>
            <person name="di Bernardo D."/>
            <person name="Down T."/>
            <person name="Engstrom P."/>
            <person name="Fagiolini M."/>
            <person name="Faulkner G."/>
            <person name="Fletcher C.F."/>
            <person name="Fukushima T."/>
            <person name="Furuno M."/>
            <person name="Futaki S."/>
            <person name="Gariboldi M."/>
            <person name="Georgii-Hemming P."/>
            <person name="Gingeras T.R."/>
            <person name="Gojobori T."/>
            <person name="Green R.E."/>
            <person name="Gustincich S."/>
            <person name="Harbers M."/>
            <person name="Hayashi Y."/>
            <person name="Hensch T.K."/>
            <person name="Hirokawa N."/>
            <person name="Hill D."/>
            <person name="Huminiecki L."/>
            <person name="Iacono M."/>
            <person name="Ikeo K."/>
            <person name="Iwama A."/>
            <person name="Ishikawa T."/>
            <person name="Jakt M."/>
            <person name="Kanapin A."/>
            <person name="Katoh M."/>
            <person name="Kawasawa Y."/>
            <person name="Kelso J."/>
            <person name="Kitamura H."/>
            <person name="Kitano H."/>
            <person name="Kollias G."/>
            <person name="Krishnan S.P."/>
            <person name="Kruger A."/>
            <person name="Kummerfeld S.K."/>
            <person name="Kurochkin I.V."/>
            <person name="Lareau L.F."/>
            <person name="Lazarevic D."/>
            <person name="Lipovich L."/>
            <person name="Liu J."/>
            <person name="Liuni S."/>
            <person name="McWilliam S."/>
            <person name="Madan Babu M."/>
            <person name="Madera M."/>
            <person name="Marchionni L."/>
            <person name="Matsuda H."/>
            <person name="Matsuzawa S."/>
            <person name="Miki H."/>
            <person name="Mignone F."/>
            <person name="Miyake S."/>
            <person name="Morris K."/>
            <person name="Mottagui-Tabar S."/>
            <person name="Mulder N."/>
            <person name="Nakano N."/>
            <person name="Nakauchi H."/>
            <person name="Ng P."/>
            <person name="Nilsson R."/>
            <person name="Nishiguchi S."/>
            <person name="Nishikawa S."/>
            <person name="Nori F."/>
            <person name="Ohara O."/>
            <person name="Okazaki Y."/>
            <person name="Orlando V."/>
            <person name="Pang K.C."/>
            <person name="Pavan W.J."/>
            <person name="Pavesi G."/>
            <person name="Pesole G."/>
            <person name="Petrovsky N."/>
            <person name="Piazza S."/>
            <person name="Reed J."/>
            <person name="Reid J.F."/>
            <person name="Ring B.Z."/>
            <person name="Ringwald M."/>
            <person name="Rost B."/>
            <person name="Ruan Y."/>
            <person name="Salzberg S.L."/>
            <person name="Sandelin A."/>
            <person name="Schneider C."/>
            <person name="Schoenbach C."/>
            <person name="Sekiguchi K."/>
            <person name="Semple C.A."/>
            <person name="Seno S."/>
            <person name="Sessa L."/>
            <person name="Sheng Y."/>
            <person name="Shibata Y."/>
            <person name="Shimada H."/>
            <person name="Shimada K."/>
            <person name="Silva D."/>
            <person name="Sinclair B."/>
            <person name="Sperling S."/>
            <person name="Stupka E."/>
            <person name="Sugiura K."/>
            <person name="Sultana R."/>
            <person name="Takenaka Y."/>
            <person name="Taki K."/>
            <person name="Tammoja K."/>
            <person name="Tan S.L."/>
            <person name="Tang S."/>
            <person name="Taylor M.S."/>
            <person name="Tegner J."/>
            <person name="Teichmann S.A."/>
            <person name="Ueda H.R."/>
            <person name="van Nimwegen E."/>
            <person name="Verardo R."/>
            <person name="Wei C.L."/>
            <person name="Yagi K."/>
            <person name="Yamanishi H."/>
            <person name="Zabarovsky E."/>
            <person name="Zhu S."/>
            <person name="Zimmer A."/>
            <person name="Hide W."/>
            <person name="Bult C."/>
            <person name="Grimmond S.M."/>
            <person name="Teasdale R.D."/>
            <person name="Liu E.T."/>
            <person name="Brusic V."/>
            <person name="Quackenbush J."/>
            <person name="Wahlestedt C."/>
            <person name="Mattick J.S."/>
            <person name="Hume D.A."/>
            <person name="Kai C."/>
            <person name="Sasaki D."/>
            <person name="Tomaru Y."/>
            <person name="Fukuda S."/>
            <person name="Kanamori-Katayama M."/>
            <person name="Suzuki M."/>
            <person name="Aoki J."/>
            <person name="Arakawa T."/>
            <person name="Iida J."/>
            <person name="Imamura K."/>
            <person name="Itoh M."/>
            <person name="Kato T."/>
            <person name="Kawaji H."/>
            <person name="Kawagashira N."/>
            <person name="Kawashima T."/>
            <person name="Kojima M."/>
            <person name="Kondo S."/>
            <person name="Konno H."/>
            <person name="Nakano K."/>
            <person name="Ninomiya N."/>
            <person name="Nishio T."/>
            <person name="Okada M."/>
            <person name="Plessy C."/>
            <person name="Shibata K."/>
            <person name="Shiraki T."/>
            <person name="Suzuki S."/>
            <person name="Tagami M."/>
            <person name="Waki K."/>
            <person name="Watahiki A."/>
            <person name="Okamura-Oho Y."/>
            <person name="Suzuki H."/>
            <person name="Kawai J."/>
            <person name="Hayashizaki Y."/>
        </authorList>
    </citation>
    <scope>NUCLEOTIDE SEQUENCE [LARGE SCALE MRNA]</scope>
    <source>
        <strain>C57BL/6J</strain>
        <tissue>Embryo</tissue>
    </source>
</reference>
<reference key="2">
    <citation type="journal article" date="2004" name="Genome Res.">
        <title>The status, quality, and expansion of the NIH full-length cDNA project: the Mammalian Gene Collection (MGC).</title>
        <authorList>
            <consortium name="The MGC Project Team"/>
        </authorList>
    </citation>
    <scope>NUCLEOTIDE SEQUENCE [LARGE SCALE MRNA]</scope>
    <source>
        <strain>FVB/N</strain>
        <tissue>Mammary tumor</tissue>
        <tissue>Salivary gland</tissue>
    </source>
</reference>
<reference key="3">
    <citation type="journal article" date="2001" name="Mol. Cell">
        <title>A TPR motif cofactor contributes to p300 activity in the p53 response.</title>
        <authorList>
            <person name="Demonacos C."/>
            <person name="Krstic-Demonacos M."/>
            <person name="La Thangue N.B."/>
        </authorList>
    </citation>
    <scope>FUNCTION</scope>
    <scope>TISSUE SPECIFICITY</scope>
    <scope>INTERACTION WITH EP300 AND JMY</scope>
    <scope>INDUCTION BY STRESS</scope>
    <scope>DOMAIN</scope>
</reference>
<reference key="4">
    <citation type="journal article" date="2004" name="Nat. Cell Biol.">
        <title>A new effector pathway links ATM kinase with the DNA damage response.</title>
        <authorList>
            <person name="Demonacos C."/>
            <person name="Krstic-Demonacos M."/>
            <person name="Smith L."/>
            <person name="Xu D."/>
            <person name="O'Connor D.P."/>
            <person name="Jansson M."/>
            <person name="La Thangue N.B."/>
        </authorList>
    </citation>
    <scope>FUNCTION</scope>
    <scope>SUBCELLULAR LOCATION</scope>
    <scope>PHOSPHORYLATION AT SER-203</scope>
    <scope>MUTAGENESIS OF SER-203</scope>
    <scope>INTERACTION WITH EP300</scope>
</reference>
<reference key="5">
    <citation type="journal article" date="2008" name="EMBO Rep.">
        <title>ATM and Chk2 kinase target the p53 cofactor Strap.</title>
        <authorList>
            <person name="Adams C.J."/>
            <person name="Graham A.L."/>
            <person name="Jansson M."/>
            <person name="Coutts A.S."/>
            <person name="Edelmann M."/>
            <person name="Smith L."/>
            <person name="Kessler B."/>
            <person name="La Thangue N.B."/>
        </authorList>
    </citation>
    <scope>FUNCTION</scope>
    <scope>SUBCELLULAR LOCATION</scope>
    <scope>INDUCTION BY STRESS</scope>
    <scope>PHOSPHORYLATION</scope>
    <scope>MUTAGENESIS OF 13-LEU--TYR-24; SER-203 AND SER-221</scope>
    <scope>DOMAIN</scope>
</reference>
<reference key="6">
    <citation type="journal article" date="2008" name="EMBO Rep.">
        <title>A transcription cofactor required for the heat-shock response.</title>
        <authorList>
            <person name="Xu D."/>
            <person name="Zalmas L.P."/>
            <person name="La Thangue N.B."/>
        </authorList>
    </citation>
    <scope>FUNCTION</scope>
    <scope>INDUCTION</scope>
    <scope>INTERACTION WITH HSF1 AND EP300</scope>
</reference>
<reference key="7">
    <citation type="journal article" date="2008" name="Nat. Cell Biol.">
        <title>Arginine methylation regulates the p53 response.</title>
        <authorList>
            <person name="Jansson M."/>
            <person name="Durant S.T."/>
            <person name="Cho E.C."/>
            <person name="Sheahan S."/>
            <person name="Edelmann M."/>
            <person name="Kessler B."/>
            <person name="La Thangue N.B."/>
        </authorList>
    </citation>
    <scope>FUNCTION</scope>
    <scope>INTERACTION WITH PRMT5</scope>
</reference>
<reference key="8">
    <citation type="journal article" date="2010" name="Cell">
        <title>A tissue-specific atlas of mouse protein phosphorylation and expression.</title>
        <authorList>
            <person name="Huttlin E.L."/>
            <person name="Jedrychowski M.P."/>
            <person name="Elias J.E."/>
            <person name="Goswami T."/>
            <person name="Rad R."/>
            <person name="Beausoleil S.A."/>
            <person name="Villen J."/>
            <person name="Haas W."/>
            <person name="Sowa M.E."/>
            <person name="Gygi S.P."/>
        </authorList>
    </citation>
    <scope>IDENTIFICATION BY MASS SPECTROMETRY [LARGE SCALE ANALYSIS]</scope>
    <source>
        <tissue>Brain</tissue>
        <tissue>Spleen</tissue>
        <tissue>Testis</tissue>
    </source>
</reference>
<reference key="9">
    <citation type="journal article" date="2015" name="Cell Death Differ.">
        <title>Cofactor Strap regulates oxidative phosphorylation and mitochondrial p53 activity through ATP synthase.</title>
        <authorList>
            <person name="Maniam S."/>
            <person name="Coutts A.S."/>
            <person name="Stratford M.R."/>
            <person name="McGouran J."/>
            <person name="Kessler B."/>
            <person name="La Thangue N.B."/>
        </authorList>
    </citation>
    <scope>FUNCTION</scope>
    <scope>SUBCELLULAR LOCATION</scope>
    <scope>INTERACTION WITH ATP5F1B AND TP53</scope>
</reference>
<reference key="10">
    <citation type="journal article" date="2019" name="J. Cell Biol.">
        <title>LC3 and STRAP regulate actin filament assembly by JMY during autophagosome formation.</title>
        <authorList>
            <person name="Hu X."/>
            <person name="Mullins R.D."/>
        </authorList>
    </citation>
    <scope>FUNCTION</scope>
    <scope>INTERACTION WITH JMY</scope>
    <scope>SUBCELLULAR LOCATION</scope>
</reference>
<reference key="11">
    <citation type="journal article" date="2012" name="Proc. Natl. Acad. Sci. U.S.A.">
        <title>The p53 cofactor Strap exhibits an unexpected TPR motif and oligonucleotide-binding (OB)-fold structure.</title>
        <authorList>
            <person name="Adams C.J."/>
            <person name="Pike A.C."/>
            <person name="Maniam S."/>
            <person name="Sharpe T.D."/>
            <person name="Coutts A.S."/>
            <person name="Knapp S."/>
            <person name="La Thangue N.B."/>
            <person name="Bullock A.N."/>
        </authorList>
    </citation>
    <scope>X-RAY CRYSTALLOGRAPHY (2.05 ANGSTROMS)</scope>
    <scope>PHOSPHORYLATION AT SER-203 AND SER-221</scope>
    <scope>TPR REPEATS</scope>
</reference>
<organism>
    <name type="scientific">Mus musculus</name>
    <name type="common">Mouse</name>
    <dbReference type="NCBI Taxonomy" id="10090"/>
    <lineage>
        <taxon>Eukaryota</taxon>
        <taxon>Metazoa</taxon>
        <taxon>Chordata</taxon>
        <taxon>Craniata</taxon>
        <taxon>Vertebrata</taxon>
        <taxon>Euteleostomi</taxon>
        <taxon>Mammalia</taxon>
        <taxon>Eutheria</taxon>
        <taxon>Euarchontoglires</taxon>
        <taxon>Glires</taxon>
        <taxon>Rodentia</taxon>
        <taxon>Myomorpha</taxon>
        <taxon>Muroidea</taxon>
        <taxon>Muridae</taxon>
        <taxon>Murinae</taxon>
        <taxon>Mus</taxon>
        <taxon>Mus</taxon>
    </lineage>
</organism>
<protein>
    <recommendedName>
        <fullName evidence="1">Tetratricopeptide repeat protein 5</fullName>
        <shortName evidence="1">TPR repeat protein 5</shortName>
    </recommendedName>
    <alternativeName>
        <fullName evidence="11">Stress-responsive activator of p300</fullName>
        <shortName evidence="10">Protein Strap</shortName>
    </alternativeName>
</protein>